<comment type="catalytic activity">
    <reaction evidence="1">
        <text>CMP + ATP = CDP + ADP</text>
        <dbReference type="Rhea" id="RHEA:11600"/>
        <dbReference type="ChEBI" id="CHEBI:30616"/>
        <dbReference type="ChEBI" id="CHEBI:58069"/>
        <dbReference type="ChEBI" id="CHEBI:60377"/>
        <dbReference type="ChEBI" id="CHEBI:456216"/>
        <dbReference type="EC" id="2.7.4.25"/>
    </reaction>
</comment>
<comment type="catalytic activity">
    <reaction evidence="1">
        <text>dCMP + ATP = dCDP + ADP</text>
        <dbReference type="Rhea" id="RHEA:25094"/>
        <dbReference type="ChEBI" id="CHEBI:30616"/>
        <dbReference type="ChEBI" id="CHEBI:57566"/>
        <dbReference type="ChEBI" id="CHEBI:58593"/>
        <dbReference type="ChEBI" id="CHEBI:456216"/>
        <dbReference type="EC" id="2.7.4.25"/>
    </reaction>
</comment>
<comment type="subcellular location">
    <subcellularLocation>
        <location evidence="1">Cytoplasm</location>
    </subcellularLocation>
</comment>
<comment type="similarity">
    <text evidence="1">Belongs to the cytidylate kinase family. Type 1 subfamily.</text>
</comment>
<name>KCY_BACC1</name>
<organism>
    <name type="scientific">Bacillus cereus (strain ATCC 10987 / NRS 248)</name>
    <dbReference type="NCBI Taxonomy" id="222523"/>
    <lineage>
        <taxon>Bacteria</taxon>
        <taxon>Bacillati</taxon>
        <taxon>Bacillota</taxon>
        <taxon>Bacilli</taxon>
        <taxon>Bacillales</taxon>
        <taxon>Bacillaceae</taxon>
        <taxon>Bacillus</taxon>
        <taxon>Bacillus cereus group</taxon>
    </lineage>
</organism>
<sequence>MDKRISIAIDGPAAAGKSTVAKVVAKKLSYVYIDTGAMYRTITYAALEQKVDIENEEQLMEVVKNVKIEFQQGENTQLVFLNGQDVSEVIRTPEVTNRVSIVAKHRLVREEMVRRQQELAEKGGVVMDGRDIGTHVLPDAEVKIFMLASVEERAERRHLENMNKGFDSNLEQLKEEIAQRDKLDSEREVSPLKKADDALELDTTSLSIEEVVQKIMSIVSGVFAK</sequence>
<reference key="1">
    <citation type="journal article" date="2004" name="Nucleic Acids Res.">
        <title>The genome sequence of Bacillus cereus ATCC 10987 reveals metabolic adaptations and a large plasmid related to Bacillus anthracis pXO1.</title>
        <authorList>
            <person name="Rasko D.A."/>
            <person name="Ravel J."/>
            <person name="Oekstad O.A."/>
            <person name="Helgason E."/>
            <person name="Cer R.Z."/>
            <person name="Jiang L."/>
            <person name="Shores K.A."/>
            <person name="Fouts D.E."/>
            <person name="Tourasse N.J."/>
            <person name="Angiuoli S.V."/>
            <person name="Kolonay J.F."/>
            <person name="Nelson W.C."/>
            <person name="Kolstoe A.-B."/>
            <person name="Fraser C.M."/>
            <person name="Read T.D."/>
        </authorList>
    </citation>
    <scope>NUCLEOTIDE SEQUENCE [LARGE SCALE GENOMIC DNA]</scope>
    <source>
        <strain>ATCC 10987 / NRS 248</strain>
    </source>
</reference>
<reference key="2">
    <citation type="journal article" date="1999" name="Microbiology">
        <title>Genome organization is not conserved between Bacillus cereus and Bacillus subtilis.</title>
        <authorList>
            <person name="Oekstad O.A."/>
            <person name="Hegna I.K."/>
            <person name="Lindbaeck T."/>
            <person name="Rishovd A.-L."/>
            <person name="Kolstoe A.-B."/>
        </authorList>
    </citation>
    <scope>NUCLEOTIDE SEQUENCE [GENOMIC DNA] OF 27-225</scope>
    <source>
        <strain>ATCC 10987 / NRS 248</strain>
    </source>
</reference>
<accession>O05386</accession>
<gene>
    <name evidence="1 2" type="primary">cmk</name>
    <name type="ordered locus">BCE_1623</name>
</gene>
<keyword id="KW-0067">ATP-binding</keyword>
<keyword id="KW-0963">Cytoplasm</keyword>
<keyword id="KW-0418">Kinase</keyword>
<keyword id="KW-0547">Nucleotide-binding</keyword>
<keyword id="KW-0808">Transferase</keyword>
<dbReference type="EC" id="2.7.4.25" evidence="1"/>
<dbReference type="EMBL" id="AE017194">
    <property type="protein sequence ID" value="AAS40552.1"/>
    <property type="molecule type" value="Genomic_DNA"/>
</dbReference>
<dbReference type="EMBL" id="Y08953">
    <property type="protein sequence ID" value="CAA70151.1"/>
    <property type="molecule type" value="Genomic_DNA"/>
</dbReference>
<dbReference type="SMR" id="O05386"/>
<dbReference type="KEGG" id="bca:BCE_1623"/>
<dbReference type="HOGENOM" id="CLU_079959_0_2_9"/>
<dbReference type="Proteomes" id="UP000002527">
    <property type="component" value="Chromosome"/>
</dbReference>
<dbReference type="GO" id="GO:0005829">
    <property type="term" value="C:cytosol"/>
    <property type="evidence" value="ECO:0007669"/>
    <property type="project" value="TreeGrafter"/>
</dbReference>
<dbReference type="GO" id="GO:0005524">
    <property type="term" value="F:ATP binding"/>
    <property type="evidence" value="ECO:0007669"/>
    <property type="project" value="UniProtKB-UniRule"/>
</dbReference>
<dbReference type="GO" id="GO:0036430">
    <property type="term" value="F:CMP kinase activity"/>
    <property type="evidence" value="ECO:0007669"/>
    <property type="project" value="RHEA"/>
</dbReference>
<dbReference type="GO" id="GO:0036431">
    <property type="term" value="F:dCMP kinase activity"/>
    <property type="evidence" value="ECO:0007669"/>
    <property type="project" value="RHEA"/>
</dbReference>
<dbReference type="GO" id="GO:0015949">
    <property type="term" value="P:nucleobase-containing small molecule interconversion"/>
    <property type="evidence" value="ECO:0007669"/>
    <property type="project" value="TreeGrafter"/>
</dbReference>
<dbReference type="GO" id="GO:0006220">
    <property type="term" value="P:pyrimidine nucleotide metabolic process"/>
    <property type="evidence" value="ECO:0007669"/>
    <property type="project" value="UniProtKB-UniRule"/>
</dbReference>
<dbReference type="CDD" id="cd02020">
    <property type="entry name" value="CMPK"/>
    <property type="match status" value="1"/>
</dbReference>
<dbReference type="FunFam" id="3.40.50.300:FF:000484">
    <property type="entry name" value="Cytidylate kinase"/>
    <property type="match status" value="1"/>
</dbReference>
<dbReference type="Gene3D" id="3.40.50.300">
    <property type="entry name" value="P-loop containing nucleotide triphosphate hydrolases"/>
    <property type="match status" value="1"/>
</dbReference>
<dbReference type="HAMAP" id="MF_00238">
    <property type="entry name" value="Cytidyl_kinase_type1"/>
    <property type="match status" value="1"/>
</dbReference>
<dbReference type="InterPro" id="IPR003136">
    <property type="entry name" value="Cytidylate_kin"/>
</dbReference>
<dbReference type="InterPro" id="IPR011994">
    <property type="entry name" value="Cytidylate_kinase_dom"/>
</dbReference>
<dbReference type="InterPro" id="IPR027417">
    <property type="entry name" value="P-loop_NTPase"/>
</dbReference>
<dbReference type="NCBIfam" id="TIGR00017">
    <property type="entry name" value="cmk"/>
    <property type="match status" value="1"/>
</dbReference>
<dbReference type="PANTHER" id="PTHR21299:SF2">
    <property type="entry name" value="CYTIDYLATE KINASE"/>
    <property type="match status" value="1"/>
</dbReference>
<dbReference type="PANTHER" id="PTHR21299">
    <property type="entry name" value="CYTIDYLATE KINASE/PANTOATE-BETA-ALANINE LIGASE"/>
    <property type="match status" value="1"/>
</dbReference>
<dbReference type="Pfam" id="PF02224">
    <property type="entry name" value="Cytidylate_kin"/>
    <property type="match status" value="1"/>
</dbReference>
<dbReference type="SUPFAM" id="SSF52540">
    <property type="entry name" value="P-loop containing nucleoside triphosphate hydrolases"/>
    <property type="match status" value="1"/>
</dbReference>
<evidence type="ECO:0000255" key="1">
    <source>
        <dbReference type="HAMAP-Rule" id="MF_00238"/>
    </source>
</evidence>
<evidence type="ECO:0000303" key="2">
    <source>
    </source>
</evidence>
<feature type="chain" id="PRO_0000131873" description="Cytidylate kinase">
    <location>
        <begin position="1"/>
        <end position="225"/>
    </location>
</feature>
<feature type="binding site" evidence="1">
    <location>
        <begin position="11"/>
        <end position="19"/>
    </location>
    <ligand>
        <name>ATP</name>
        <dbReference type="ChEBI" id="CHEBI:30616"/>
    </ligand>
</feature>
<protein>
    <recommendedName>
        <fullName evidence="1">Cytidylate kinase</fullName>
        <shortName evidence="1">CK</shortName>
        <ecNumber evidence="1">2.7.4.25</ecNumber>
    </recommendedName>
    <alternativeName>
        <fullName evidence="1">Cytidine monophosphate kinase</fullName>
        <shortName evidence="1">CMP kinase</shortName>
    </alternativeName>
</protein>
<proteinExistence type="inferred from homology"/>